<accession>Q84V25</accession>
<protein>
    <recommendedName>
        <fullName>2-methylene-furan-3-one reductase</fullName>
        <ecNumber evidence="2 3">1.3.1.105</ecNumber>
    </recommendedName>
    <alternativeName>
        <fullName>Enone oxidoreductase</fullName>
        <shortName>FaEO</shortName>
    </alternativeName>
    <alternativeName>
        <fullName>Quinone oxidoreductase</fullName>
        <shortName>FaQR</shortName>
    </alternativeName>
</protein>
<name>ENOXE_FRAAN</name>
<comment type="function">
    <text evidence="2 3">Enone oxidoreductase involved in the biosynthesis of 4-hydroxy-2,5-dimethyl-3(2H)-furanone (HDMF or furaneol), the key flavor compound in strawberries. Can use both NADH and NADPH as the electron donor.</text>
</comment>
<comment type="catalytic activity">
    <reaction evidence="2 3">
        <text>4-hydroxy-2,5-dimethyl-furan-3(2H)-one + NADP(+) = 4-hydroxy-5-methyl-2-methylenefuran-3(2H)-one + NADPH + H(+)</text>
        <dbReference type="Rhea" id="RHEA:39111"/>
        <dbReference type="ChEBI" id="CHEBI:15378"/>
        <dbReference type="ChEBI" id="CHEBI:57783"/>
        <dbReference type="ChEBI" id="CHEBI:58349"/>
        <dbReference type="ChEBI" id="CHEBI:76245"/>
        <dbReference type="ChEBI" id="CHEBI:76247"/>
        <dbReference type="EC" id="1.3.1.105"/>
    </reaction>
</comment>
<comment type="biophysicochemical properties">
    <kinetics>
        <KM evidence="2 3">2.14 mM for (2E)-2-ethylidene-4-hydroxy-5-methyl-3(2H)-furanone (EDHMF)</KM>
        <KM evidence="2 3">1.04 mM for (2E)-4-hydroxy-5-methyl-2-propylidene-3(2H)-furanone (HMPDF)</KM>
        <KM evidence="2 3">0.82 mM for (2E)-2-butylidene-4-hydroxy-5-methyl- 3(2H)-furanone (BDHMF)</KM>
        <text>kcat is 1.94 sec(-1) with EDHMF as substrate. kcat is 2.69 sec(-1) with HMPDF as substrate. kcat is 1.43 sec(-1) with BDHMF as substrate.</text>
    </kinetics>
</comment>
<comment type="subunit">
    <text evidence="2">Monomer.</text>
</comment>
<comment type="developmental stage">
    <text evidence="2">Up-regulated during ripening.</text>
</comment>
<comment type="PTM">
    <text evidence="2">The N-terminus is blocked.</text>
</comment>
<comment type="similarity">
    <text evidence="4">Belongs to the zinc-containing alcohol dehydrogenase family. Quinone oxidoreductase subfamily.</text>
</comment>
<sequence length="322" mass="34226">MAAAPSESIPSVNKAWVYSEYGKTSDVLKFDPSVAVPEVKEDQVLIKVVAASLNPVDFKRALGYFKDTDSPLPTVPGYDVAGVVVKVGSQVTKFKVGDEVYGDLNEAALVNPTRFGSLAEYTAADERVLAHKPKDLSFIEAASLPLAIETAYEGLERAELSAGKSILVLGGAGGVGTHIIQLAKHVFGASKVAATASTKKLDFLRTLGVDLAIDYTKENIEDLPEKFDVVYDAVGETDKAVKAVKEGGKVVTIVGPATPPAIHFVLTSKGSVLEKLKPYLESGKVKPVLDPTSPYPFTKLVEAFGYLESSRATGKVVVYPIP</sequence>
<reference key="1">
    <citation type="journal article" date="2006" name="Plant Cell">
        <title>FaQR, required for the biosynthesis of the strawberry flavor compound 4-hydroxy-2,5-dimethyl-3(2H)-furanone, encodes an enone oxidoreductase.</title>
        <authorList>
            <person name="Raab T."/>
            <person name="Lopez-Raez J.A."/>
            <person name="Klein D."/>
            <person name="Caballero J.L."/>
            <person name="Moyano E."/>
            <person name="Schwab W."/>
            <person name="Munoz-Blanco J."/>
        </authorList>
    </citation>
    <scope>NUCLEOTIDE SEQUENCE [MRNA]</scope>
    <scope>FUNCTION</scope>
    <scope>CATALYTIC ACTIVITY</scope>
    <scope>SUBSTRATE SPECIFICITY</scope>
    <scope>BIOPHYSICOCHEMICAL PROPERTIES</scope>
    <scope>DEVELOPMENTAL STAGE</scope>
    <scope>INDUCTION BY AUXIN</scope>
    <scope>TISSUE SPECIFICITY</scope>
    <scope>SUBUNIT</scope>
    <source>
        <strain>cv. Elsanta</strain>
    </source>
</reference>
<reference key="2">
    <citation type="journal article" date="2007" name="J. Agric. Food Chem.">
        <title>Functional characterization of enone oxidoreductases from strawberry and tomato fruit.</title>
        <authorList>
            <person name="Klein D."/>
            <person name="Fink B."/>
            <person name="Arold B."/>
            <person name="Eisenreich W."/>
            <person name="Schwab W."/>
        </authorList>
    </citation>
    <scope>FUNCTION</scope>
    <scope>CATALYTIC ACTIVITY</scope>
    <scope>BIOPHYSICOCHEMICAL PROPERTIES</scope>
</reference>
<feature type="chain" id="PRO_0000428656" description="2-methylene-furan-3-one reductase">
    <location>
        <begin position="1"/>
        <end position="322"/>
    </location>
</feature>
<feature type="binding site" evidence="1">
    <location>
        <position position="59"/>
    </location>
    <ligand>
        <name>NADP(+)</name>
        <dbReference type="ChEBI" id="CHEBI:58349"/>
    </ligand>
</feature>
<feature type="binding site" evidence="1">
    <location>
        <position position="59"/>
    </location>
    <ligand>
        <name>substrate</name>
    </ligand>
</feature>
<feature type="binding site" evidence="1">
    <location>
        <begin position="174"/>
        <end position="175"/>
    </location>
    <ligand>
        <name>NADP(+)</name>
        <dbReference type="ChEBI" id="CHEBI:58349"/>
    </ligand>
</feature>
<feature type="binding site" evidence="1">
    <location>
        <begin position="197"/>
        <end position="200"/>
    </location>
    <ligand>
        <name>NADP(+)</name>
        <dbReference type="ChEBI" id="CHEBI:58349"/>
    </ligand>
</feature>
<feature type="binding site" evidence="1">
    <location>
        <position position="215"/>
    </location>
    <ligand>
        <name>NADP(+)</name>
        <dbReference type="ChEBI" id="CHEBI:58349"/>
    </ligand>
</feature>
<feature type="binding site" evidence="1">
    <location>
        <position position="253"/>
    </location>
    <ligand>
        <name>NADP(+)</name>
        <dbReference type="ChEBI" id="CHEBI:58349"/>
    </ligand>
</feature>
<feature type="binding site" evidence="1">
    <location>
        <begin position="264"/>
        <end position="266"/>
    </location>
    <ligand>
        <name>NADP(+)</name>
        <dbReference type="ChEBI" id="CHEBI:58349"/>
    </ligand>
</feature>
<feature type="binding site" evidence="1">
    <location>
        <begin position="311"/>
        <end position="322"/>
    </location>
    <ligand>
        <name>NADP(+)</name>
        <dbReference type="ChEBI" id="CHEBI:58349"/>
    </ligand>
</feature>
<feature type="binding site" evidence="1">
    <location>
        <begin position="311"/>
        <end position="312"/>
    </location>
    <ligand>
        <name>NADP(+)</name>
        <dbReference type="ChEBI" id="CHEBI:58349"/>
    </ligand>
</feature>
<organism>
    <name type="scientific">Fragaria ananassa</name>
    <name type="common">Strawberry</name>
    <name type="synonym">Fragaria chiloensis x Fragaria virginiana</name>
    <dbReference type="NCBI Taxonomy" id="3747"/>
    <lineage>
        <taxon>Eukaryota</taxon>
        <taxon>Viridiplantae</taxon>
        <taxon>Streptophyta</taxon>
        <taxon>Embryophyta</taxon>
        <taxon>Tracheophyta</taxon>
        <taxon>Spermatophyta</taxon>
        <taxon>Magnoliopsida</taxon>
        <taxon>eudicotyledons</taxon>
        <taxon>Gunneridae</taxon>
        <taxon>Pentapetalae</taxon>
        <taxon>rosids</taxon>
        <taxon>fabids</taxon>
        <taxon>Rosales</taxon>
        <taxon>Rosaceae</taxon>
        <taxon>Rosoideae</taxon>
        <taxon>Potentilleae</taxon>
        <taxon>Fragariinae</taxon>
        <taxon>Fragaria</taxon>
    </lineage>
</organism>
<dbReference type="EC" id="1.3.1.105" evidence="2 3"/>
<dbReference type="EMBL" id="AY158836">
    <property type="protein sequence ID" value="AAO22131.1"/>
    <property type="molecule type" value="Genomic_DNA"/>
</dbReference>
<dbReference type="SMR" id="Q84V25"/>
<dbReference type="BioCyc" id="MetaCyc:MONOMER-14068"/>
<dbReference type="GO" id="GO:0102978">
    <property type="term" value="F:furaneol oxidoreductase activity"/>
    <property type="evidence" value="ECO:0007669"/>
    <property type="project" value="UniProtKB-EC"/>
</dbReference>
<dbReference type="GO" id="GO:0008270">
    <property type="term" value="F:zinc ion binding"/>
    <property type="evidence" value="ECO:0007669"/>
    <property type="project" value="InterPro"/>
</dbReference>
<dbReference type="CDD" id="cd05289">
    <property type="entry name" value="MDR_like_2"/>
    <property type="match status" value="1"/>
</dbReference>
<dbReference type="Gene3D" id="3.90.180.10">
    <property type="entry name" value="Medium-chain alcohol dehydrogenases, catalytic domain"/>
    <property type="match status" value="1"/>
</dbReference>
<dbReference type="Gene3D" id="3.40.50.720">
    <property type="entry name" value="NAD(P)-binding Rossmann-like Domain"/>
    <property type="match status" value="1"/>
</dbReference>
<dbReference type="InterPro" id="IPR013154">
    <property type="entry name" value="ADH-like_N"/>
</dbReference>
<dbReference type="InterPro" id="IPR044626">
    <property type="entry name" value="AOR-like"/>
</dbReference>
<dbReference type="InterPro" id="IPR011032">
    <property type="entry name" value="GroES-like_sf"/>
</dbReference>
<dbReference type="InterPro" id="IPR036291">
    <property type="entry name" value="NAD(P)-bd_dom_sf"/>
</dbReference>
<dbReference type="InterPro" id="IPR020843">
    <property type="entry name" value="PKS_ER"/>
</dbReference>
<dbReference type="InterPro" id="IPR002364">
    <property type="entry name" value="Quin_OxRdtase/zeta-crystal_CS"/>
</dbReference>
<dbReference type="PANTHER" id="PTHR44573:SF3">
    <property type="entry name" value="CYTOSOLIC ALKENAL_ONE OXIDOREDUCTASE"/>
    <property type="match status" value="1"/>
</dbReference>
<dbReference type="PANTHER" id="PTHR44573">
    <property type="entry name" value="NADPH-DEPENDENT ALKENAL/ONE OXIDOREDUCTASE, CHLOROPLASTIC"/>
    <property type="match status" value="1"/>
</dbReference>
<dbReference type="Pfam" id="PF08240">
    <property type="entry name" value="ADH_N"/>
    <property type="match status" value="1"/>
</dbReference>
<dbReference type="Pfam" id="PF13602">
    <property type="entry name" value="ADH_zinc_N_2"/>
    <property type="match status" value="1"/>
</dbReference>
<dbReference type="SMART" id="SM00829">
    <property type="entry name" value="PKS_ER"/>
    <property type="match status" value="1"/>
</dbReference>
<dbReference type="SUPFAM" id="SSF50129">
    <property type="entry name" value="GroES-like"/>
    <property type="match status" value="1"/>
</dbReference>
<dbReference type="SUPFAM" id="SSF51735">
    <property type="entry name" value="NAD(P)-binding Rossmann-fold domains"/>
    <property type="match status" value="1"/>
</dbReference>
<dbReference type="PROSITE" id="PS01162">
    <property type="entry name" value="QOR_ZETA_CRYSTAL"/>
    <property type="match status" value="1"/>
</dbReference>
<gene>
    <name type="primary">EO</name>
    <name type="synonym">QR</name>
</gene>
<keyword id="KW-0520">NAD</keyword>
<keyword id="KW-0521">NADP</keyword>
<keyword id="KW-0560">Oxidoreductase</keyword>
<proteinExistence type="evidence at protein level"/>
<evidence type="ECO:0000250" key="1"/>
<evidence type="ECO:0000269" key="2">
    <source>
    </source>
</evidence>
<evidence type="ECO:0000269" key="3">
    <source>
    </source>
</evidence>
<evidence type="ECO:0000305" key="4"/>